<organism>
    <name type="scientific">Dictyostelium discoideum</name>
    <name type="common">Social amoeba</name>
    <dbReference type="NCBI Taxonomy" id="44689"/>
    <lineage>
        <taxon>Eukaryota</taxon>
        <taxon>Amoebozoa</taxon>
        <taxon>Evosea</taxon>
        <taxon>Eumycetozoa</taxon>
        <taxon>Dictyostelia</taxon>
        <taxon>Dictyosteliales</taxon>
        <taxon>Dictyosteliaceae</taxon>
        <taxon>Dictyostelium</taxon>
    </lineage>
</organism>
<feature type="chain" id="PRO_0000362037" description="Probable serine/threonine-protein kinase DDB_G0279405">
    <location>
        <begin position="1"/>
        <end position="695"/>
    </location>
</feature>
<feature type="domain" description="Protein kinase" evidence="1">
    <location>
        <begin position="201"/>
        <end position="462"/>
    </location>
</feature>
<feature type="region of interest" description="Disordered" evidence="3">
    <location>
        <begin position="119"/>
        <end position="138"/>
    </location>
</feature>
<feature type="region of interest" description="Disordered" evidence="3">
    <location>
        <begin position="149"/>
        <end position="192"/>
    </location>
</feature>
<feature type="region of interest" description="Disordered" evidence="3">
    <location>
        <begin position="491"/>
        <end position="580"/>
    </location>
</feature>
<feature type="compositionally biased region" description="Pro residues" evidence="3">
    <location>
        <begin position="124"/>
        <end position="138"/>
    </location>
</feature>
<feature type="compositionally biased region" description="Low complexity" evidence="3">
    <location>
        <begin position="149"/>
        <end position="160"/>
    </location>
</feature>
<feature type="compositionally biased region" description="Polar residues" evidence="3">
    <location>
        <begin position="161"/>
        <end position="173"/>
    </location>
</feature>
<feature type="compositionally biased region" description="Low complexity" evidence="3">
    <location>
        <begin position="510"/>
        <end position="528"/>
    </location>
</feature>
<feature type="compositionally biased region" description="Polar residues" evidence="3">
    <location>
        <begin position="529"/>
        <end position="541"/>
    </location>
</feature>
<feature type="compositionally biased region" description="Low complexity" evidence="3">
    <location>
        <begin position="542"/>
        <end position="580"/>
    </location>
</feature>
<feature type="active site" description="Proton acceptor" evidence="1 2">
    <location>
        <position position="329"/>
    </location>
</feature>
<feature type="binding site" evidence="1">
    <location>
        <begin position="207"/>
        <end position="215"/>
    </location>
    <ligand>
        <name>ATP</name>
        <dbReference type="ChEBI" id="CHEBI:30616"/>
    </ligand>
</feature>
<feature type="binding site" evidence="1">
    <location>
        <position position="230"/>
    </location>
    <ligand>
        <name>ATP</name>
        <dbReference type="ChEBI" id="CHEBI:30616"/>
    </ligand>
</feature>
<protein>
    <recommendedName>
        <fullName>Probable serine/threonine-protein kinase DDB_G0279405</fullName>
        <ecNumber>2.7.11.1</ecNumber>
    </recommendedName>
</protein>
<sequence>MGCIFTKPSPEQQKFDGEDYECENKKNLNLISYIRNLLFGNNSHQQLYNEIIPTTTSTTSTTTNSVYQNIGLDGYNNNNNNNNNNNNNNNIMNNYGYDDYGYSYEEDEDYYDEMPIPTIVAQPQPQPQPQPQPQPQPQQPIRIVSQNQQIPTTPPQQISQFNITGNKSPSSIGSRHRSKPKETLRAHKKRHKDGHKMVNEYVFVRKLGKGTFGKVKLAYHHDTHHLYAIKIFNKIRLKKQTMGIGRPNAFDDVLKEIAIMKKMNHINVVKLYEVINDPQEEYIYIVMEYIEGGSIMSANETSEDLARKYFRDIVFGLEYLHEQKVIHKDLKPENLLVNSEGVVKITDFGVSHIFDDDDVVRCSRGSPAFLAPELCRNESQPISGKGVDVWALGVSLYCLIFARTPFISKTNSLLDIYDQIVNHEPTYPREISNDLMDLFKRLLDKNPLTRIQIAEIKSHKWTTISGTWPMNELDHLILSVTDQEMIDAISTDHTIKPSDNTTTDEDDSDLSSSSGGESSGIIGSSNESKSMYNNVNSKQKIQNQNQNQNQNQNQNQNQNQNQNHNQNQNQNQNQNNNNNSLIEKSNISIPASSSSISNNDSCYENRNVYIKDEEMNMICNDSVIMDPIKELNKIDGLNYGCDFQIGKEYSDFQYNSGHFIYDLVDENESQISRESANDYYLPFKTNKYLNNKSIV</sequence>
<comment type="catalytic activity">
    <reaction>
        <text>L-seryl-[protein] + ATP = O-phospho-L-seryl-[protein] + ADP + H(+)</text>
        <dbReference type="Rhea" id="RHEA:17989"/>
        <dbReference type="Rhea" id="RHEA-COMP:9863"/>
        <dbReference type="Rhea" id="RHEA-COMP:11604"/>
        <dbReference type="ChEBI" id="CHEBI:15378"/>
        <dbReference type="ChEBI" id="CHEBI:29999"/>
        <dbReference type="ChEBI" id="CHEBI:30616"/>
        <dbReference type="ChEBI" id="CHEBI:83421"/>
        <dbReference type="ChEBI" id="CHEBI:456216"/>
        <dbReference type="EC" id="2.7.11.1"/>
    </reaction>
</comment>
<comment type="catalytic activity">
    <reaction>
        <text>L-threonyl-[protein] + ATP = O-phospho-L-threonyl-[protein] + ADP + H(+)</text>
        <dbReference type="Rhea" id="RHEA:46608"/>
        <dbReference type="Rhea" id="RHEA-COMP:11060"/>
        <dbReference type="Rhea" id="RHEA-COMP:11605"/>
        <dbReference type="ChEBI" id="CHEBI:15378"/>
        <dbReference type="ChEBI" id="CHEBI:30013"/>
        <dbReference type="ChEBI" id="CHEBI:30616"/>
        <dbReference type="ChEBI" id="CHEBI:61977"/>
        <dbReference type="ChEBI" id="CHEBI:456216"/>
        <dbReference type="EC" id="2.7.11.1"/>
    </reaction>
</comment>
<comment type="similarity">
    <text evidence="1">Belongs to the protein kinase superfamily. Ser/Thr protein kinase family.</text>
</comment>
<evidence type="ECO:0000255" key="1">
    <source>
        <dbReference type="PROSITE-ProRule" id="PRU00159"/>
    </source>
</evidence>
<evidence type="ECO:0000255" key="2">
    <source>
        <dbReference type="PROSITE-ProRule" id="PRU10027"/>
    </source>
</evidence>
<evidence type="ECO:0000256" key="3">
    <source>
        <dbReference type="SAM" id="MobiDB-lite"/>
    </source>
</evidence>
<accession>Q54WW7</accession>
<proteinExistence type="inferred from homology"/>
<dbReference type="EC" id="2.7.11.1"/>
<dbReference type="EMBL" id="AAFI02000030">
    <property type="protein sequence ID" value="EAL67851.1"/>
    <property type="molecule type" value="Genomic_DNA"/>
</dbReference>
<dbReference type="RefSeq" id="XP_641810.1">
    <property type="nucleotide sequence ID" value="XM_636718.1"/>
</dbReference>
<dbReference type="SMR" id="Q54WW7"/>
<dbReference type="STRING" id="44689.Q54WW7"/>
<dbReference type="PaxDb" id="44689-DDB0220010"/>
<dbReference type="EnsemblProtists" id="EAL67851">
    <property type="protein sequence ID" value="EAL67851"/>
    <property type="gene ID" value="DDB_G0279405"/>
</dbReference>
<dbReference type="GeneID" id="8622006"/>
<dbReference type="KEGG" id="ddi:DDB_G0279405"/>
<dbReference type="dictyBase" id="DDB_G0279405"/>
<dbReference type="VEuPathDB" id="AmoebaDB:DDB_G0279405"/>
<dbReference type="eggNOG" id="KOG0585">
    <property type="taxonomic scope" value="Eukaryota"/>
</dbReference>
<dbReference type="HOGENOM" id="CLU_396614_0_0_1"/>
<dbReference type="InParanoid" id="Q54WW7"/>
<dbReference type="PRO" id="PR:Q54WW7"/>
<dbReference type="Proteomes" id="UP000002195">
    <property type="component" value="Chromosome 3"/>
</dbReference>
<dbReference type="GO" id="GO:0005524">
    <property type="term" value="F:ATP binding"/>
    <property type="evidence" value="ECO:0007669"/>
    <property type="project" value="UniProtKB-KW"/>
</dbReference>
<dbReference type="GO" id="GO:0106310">
    <property type="term" value="F:protein serine kinase activity"/>
    <property type="evidence" value="ECO:0007669"/>
    <property type="project" value="RHEA"/>
</dbReference>
<dbReference type="GO" id="GO:0004674">
    <property type="term" value="F:protein serine/threonine kinase activity"/>
    <property type="evidence" value="ECO:0007669"/>
    <property type="project" value="UniProtKB-KW"/>
</dbReference>
<dbReference type="GO" id="GO:0099139">
    <property type="term" value="P:cheating during chimeric sorocarp development"/>
    <property type="evidence" value="ECO:0000315"/>
    <property type="project" value="dictyBase"/>
</dbReference>
<dbReference type="CDD" id="cd14008">
    <property type="entry name" value="STKc_LKB1_CaMKK"/>
    <property type="match status" value="1"/>
</dbReference>
<dbReference type="FunFam" id="1.10.510.10:FF:000571">
    <property type="entry name" value="Maternal embryonic leucine zipper kinase"/>
    <property type="match status" value="1"/>
</dbReference>
<dbReference type="FunFam" id="3.30.200.20:FF:000206">
    <property type="entry name" value="Serine/threonine-protein kinase Ssp1"/>
    <property type="match status" value="1"/>
</dbReference>
<dbReference type="Gene3D" id="1.10.510.10">
    <property type="entry name" value="Transferase(Phosphotransferase) domain 1"/>
    <property type="match status" value="1"/>
</dbReference>
<dbReference type="InterPro" id="IPR011009">
    <property type="entry name" value="Kinase-like_dom_sf"/>
</dbReference>
<dbReference type="InterPro" id="IPR000719">
    <property type="entry name" value="Prot_kinase_dom"/>
</dbReference>
<dbReference type="InterPro" id="IPR017441">
    <property type="entry name" value="Protein_kinase_ATP_BS"/>
</dbReference>
<dbReference type="InterPro" id="IPR008271">
    <property type="entry name" value="Ser/Thr_kinase_AS"/>
</dbReference>
<dbReference type="PANTHER" id="PTHR24346">
    <property type="entry name" value="MAP/MICROTUBULE AFFINITY-REGULATING KINASE"/>
    <property type="match status" value="1"/>
</dbReference>
<dbReference type="PANTHER" id="PTHR24346:SF77">
    <property type="entry name" value="SERINE THREONINE PROTEIN KINASE"/>
    <property type="match status" value="1"/>
</dbReference>
<dbReference type="Pfam" id="PF00069">
    <property type="entry name" value="Pkinase"/>
    <property type="match status" value="1"/>
</dbReference>
<dbReference type="SMART" id="SM00220">
    <property type="entry name" value="S_TKc"/>
    <property type="match status" value="1"/>
</dbReference>
<dbReference type="SUPFAM" id="SSF56112">
    <property type="entry name" value="Protein kinase-like (PK-like)"/>
    <property type="match status" value="1"/>
</dbReference>
<dbReference type="PROSITE" id="PS00107">
    <property type="entry name" value="PROTEIN_KINASE_ATP"/>
    <property type="match status" value="1"/>
</dbReference>
<dbReference type="PROSITE" id="PS50011">
    <property type="entry name" value="PROTEIN_KINASE_DOM"/>
    <property type="match status" value="1"/>
</dbReference>
<dbReference type="PROSITE" id="PS00108">
    <property type="entry name" value="PROTEIN_KINASE_ST"/>
    <property type="match status" value="1"/>
</dbReference>
<gene>
    <name type="ORF">DDB_G0279405</name>
</gene>
<reference key="1">
    <citation type="journal article" date="2005" name="Nature">
        <title>The genome of the social amoeba Dictyostelium discoideum.</title>
        <authorList>
            <person name="Eichinger L."/>
            <person name="Pachebat J.A."/>
            <person name="Gloeckner G."/>
            <person name="Rajandream M.A."/>
            <person name="Sucgang R."/>
            <person name="Berriman M."/>
            <person name="Song J."/>
            <person name="Olsen R."/>
            <person name="Szafranski K."/>
            <person name="Xu Q."/>
            <person name="Tunggal B."/>
            <person name="Kummerfeld S."/>
            <person name="Madera M."/>
            <person name="Konfortov B.A."/>
            <person name="Rivero F."/>
            <person name="Bankier A.T."/>
            <person name="Lehmann R."/>
            <person name="Hamlin N."/>
            <person name="Davies R."/>
            <person name="Gaudet P."/>
            <person name="Fey P."/>
            <person name="Pilcher K."/>
            <person name="Chen G."/>
            <person name="Saunders D."/>
            <person name="Sodergren E.J."/>
            <person name="Davis P."/>
            <person name="Kerhornou A."/>
            <person name="Nie X."/>
            <person name="Hall N."/>
            <person name="Anjard C."/>
            <person name="Hemphill L."/>
            <person name="Bason N."/>
            <person name="Farbrother P."/>
            <person name="Desany B."/>
            <person name="Just E."/>
            <person name="Morio T."/>
            <person name="Rost R."/>
            <person name="Churcher C.M."/>
            <person name="Cooper J."/>
            <person name="Haydock S."/>
            <person name="van Driessche N."/>
            <person name="Cronin A."/>
            <person name="Goodhead I."/>
            <person name="Muzny D.M."/>
            <person name="Mourier T."/>
            <person name="Pain A."/>
            <person name="Lu M."/>
            <person name="Harper D."/>
            <person name="Lindsay R."/>
            <person name="Hauser H."/>
            <person name="James K.D."/>
            <person name="Quiles M."/>
            <person name="Madan Babu M."/>
            <person name="Saito T."/>
            <person name="Buchrieser C."/>
            <person name="Wardroper A."/>
            <person name="Felder M."/>
            <person name="Thangavelu M."/>
            <person name="Johnson D."/>
            <person name="Knights A."/>
            <person name="Loulseged H."/>
            <person name="Mungall K.L."/>
            <person name="Oliver K."/>
            <person name="Price C."/>
            <person name="Quail M.A."/>
            <person name="Urushihara H."/>
            <person name="Hernandez J."/>
            <person name="Rabbinowitsch E."/>
            <person name="Steffen D."/>
            <person name="Sanders M."/>
            <person name="Ma J."/>
            <person name="Kohara Y."/>
            <person name="Sharp S."/>
            <person name="Simmonds M.N."/>
            <person name="Spiegler S."/>
            <person name="Tivey A."/>
            <person name="Sugano S."/>
            <person name="White B."/>
            <person name="Walker D."/>
            <person name="Woodward J.R."/>
            <person name="Winckler T."/>
            <person name="Tanaka Y."/>
            <person name="Shaulsky G."/>
            <person name="Schleicher M."/>
            <person name="Weinstock G.M."/>
            <person name="Rosenthal A."/>
            <person name="Cox E.C."/>
            <person name="Chisholm R.L."/>
            <person name="Gibbs R.A."/>
            <person name="Loomis W.F."/>
            <person name="Platzer M."/>
            <person name="Kay R.R."/>
            <person name="Williams J.G."/>
            <person name="Dear P.H."/>
            <person name="Noegel A.A."/>
            <person name="Barrell B.G."/>
            <person name="Kuspa A."/>
        </authorList>
    </citation>
    <scope>NUCLEOTIDE SEQUENCE [LARGE SCALE GENOMIC DNA]</scope>
    <source>
        <strain>AX4</strain>
    </source>
</reference>
<name>Y0010_DICDI</name>
<keyword id="KW-0067">ATP-binding</keyword>
<keyword id="KW-0418">Kinase</keyword>
<keyword id="KW-0547">Nucleotide-binding</keyword>
<keyword id="KW-1185">Reference proteome</keyword>
<keyword id="KW-0723">Serine/threonine-protein kinase</keyword>
<keyword id="KW-0808">Transferase</keyword>